<dbReference type="EMBL" id="AF116857">
    <property type="protein sequence ID" value="AAD26692.1"/>
    <property type="molecule type" value="Genomic_DNA"/>
</dbReference>
<dbReference type="RefSeq" id="NP_001231462.1">
    <property type="nucleotide sequence ID" value="NM_001244533.1"/>
</dbReference>
<dbReference type="SMR" id="Q9WVH0"/>
<dbReference type="PaxDb" id="10029-NP_001231462.1"/>
<dbReference type="GeneID" id="100689293"/>
<dbReference type="KEGG" id="cge:100689293"/>
<dbReference type="CTD" id="6207"/>
<dbReference type="eggNOG" id="KOG0400">
    <property type="taxonomic scope" value="Eukaryota"/>
</dbReference>
<dbReference type="OrthoDB" id="623277at2759"/>
<dbReference type="Proteomes" id="UP000694386">
    <property type="component" value="Unplaced"/>
</dbReference>
<dbReference type="Proteomes" id="UP001108280">
    <property type="component" value="Chromosome 3"/>
</dbReference>
<dbReference type="GO" id="GO:0022627">
    <property type="term" value="C:cytosolic small ribosomal subunit"/>
    <property type="evidence" value="ECO:0007669"/>
    <property type="project" value="TreeGrafter"/>
</dbReference>
<dbReference type="GO" id="GO:0005730">
    <property type="term" value="C:nucleolus"/>
    <property type="evidence" value="ECO:0007669"/>
    <property type="project" value="UniProtKB-SubCell"/>
</dbReference>
<dbReference type="GO" id="GO:0032040">
    <property type="term" value="C:small-subunit processome"/>
    <property type="evidence" value="ECO:0000250"/>
    <property type="project" value="UniProtKB"/>
</dbReference>
<dbReference type="GO" id="GO:0070181">
    <property type="term" value="F:small ribosomal subunit rRNA binding"/>
    <property type="evidence" value="ECO:0007669"/>
    <property type="project" value="TreeGrafter"/>
</dbReference>
<dbReference type="GO" id="GO:0003735">
    <property type="term" value="F:structural constituent of ribosome"/>
    <property type="evidence" value="ECO:0007669"/>
    <property type="project" value="InterPro"/>
</dbReference>
<dbReference type="GO" id="GO:0042274">
    <property type="term" value="P:ribosomal small subunit biogenesis"/>
    <property type="evidence" value="ECO:0000250"/>
    <property type="project" value="UniProtKB"/>
</dbReference>
<dbReference type="GO" id="GO:0006412">
    <property type="term" value="P:translation"/>
    <property type="evidence" value="ECO:0007669"/>
    <property type="project" value="InterPro"/>
</dbReference>
<dbReference type="CDD" id="cd00353">
    <property type="entry name" value="Ribosomal_S15p_S13e"/>
    <property type="match status" value="1"/>
</dbReference>
<dbReference type="FunFam" id="1.10.287.10:FF:000003">
    <property type="entry name" value="40S ribosomal protein S13"/>
    <property type="match status" value="1"/>
</dbReference>
<dbReference type="FunFam" id="4.10.860.130:FF:000001">
    <property type="entry name" value="40S ribosomal protein S13"/>
    <property type="match status" value="1"/>
</dbReference>
<dbReference type="Gene3D" id="4.10.860.130">
    <property type="match status" value="1"/>
</dbReference>
<dbReference type="Gene3D" id="1.10.287.10">
    <property type="entry name" value="S15/NS1, RNA-binding"/>
    <property type="match status" value="1"/>
</dbReference>
<dbReference type="HAMAP" id="MF_01343_A">
    <property type="entry name" value="Ribosomal_uS15_A"/>
    <property type="match status" value="1"/>
</dbReference>
<dbReference type="InterPro" id="IPR000589">
    <property type="entry name" value="Ribosomal_uS15"/>
</dbReference>
<dbReference type="InterPro" id="IPR023029">
    <property type="entry name" value="Ribosomal_uS15_arc_euk"/>
</dbReference>
<dbReference type="InterPro" id="IPR012606">
    <property type="entry name" value="Ribosomal_uS15_N"/>
</dbReference>
<dbReference type="InterPro" id="IPR009068">
    <property type="entry name" value="uS15_NS1_RNA-bd_sf"/>
</dbReference>
<dbReference type="NCBIfam" id="NF006331">
    <property type="entry name" value="PRK08561.1"/>
    <property type="match status" value="1"/>
</dbReference>
<dbReference type="PANTHER" id="PTHR11885">
    <property type="entry name" value="RIBOSOMAL PROTEIN S15P/S13E"/>
    <property type="match status" value="1"/>
</dbReference>
<dbReference type="PANTHER" id="PTHR11885:SF6">
    <property type="entry name" value="SMALL RIBOSOMAL SUBUNIT PROTEIN US15"/>
    <property type="match status" value="1"/>
</dbReference>
<dbReference type="Pfam" id="PF08069">
    <property type="entry name" value="Ribosomal_S13_N"/>
    <property type="match status" value="1"/>
</dbReference>
<dbReference type="Pfam" id="PF00312">
    <property type="entry name" value="Ribosomal_S15"/>
    <property type="match status" value="1"/>
</dbReference>
<dbReference type="SMART" id="SM01386">
    <property type="entry name" value="Ribosomal_S13_N"/>
    <property type="match status" value="1"/>
</dbReference>
<dbReference type="SMART" id="SM01387">
    <property type="entry name" value="Ribosomal_S15"/>
    <property type="match status" value="1"/>
</dbReference>
<dbReference type="SUPFAM" id="SSF47060">
    <property type="entry name" value="S15/NS1 RNA-binding domain"/>
    <property type="match status" value="1"/>
</dbReference>
<dbReference type="PROSITE" id="PS00362">
    <property type="entry name" value="RIBOSOMAL_S15"/>
    <property type="match status" value="1"/>
</dbReference>
<comment type="function">
    <text evidence="1">Component of the small ribosomal subunit. The ribosome is a large ribonucleoprotein complex responsible for the synthesis of proteins in the cell. Part of the small subunit (SSU) processome, first precursor of the small eukaryotic ribosomal subunit. During the assembly of the SSU processome in the nucleolus, many ribosome biogenesis factors, an RNA chaperone and ribosomal proteins associate with the nascent pre-rRNA and work in concert to generate RNA folding, modifications, rearrangements and cleavage as well as targeted degradation of pre-ribosomal RNA by the RNA exosome.</text>
</comment>
<comment type="subunit">
    <text evidence="1">Component of the small ribosomal subunit. Part of the small subunit (SSU) processome, composed of more than 70 proteins and the RNA chaperone small nucleolar RNA (snoRNA) U3.</text>
</comment>
<comment type="subcellular location">
    <subcellularLocation>
        <location evidence="1">Cytoplasm</location>
    </subcellularLocation>
    <subcellularLocation>
        <location evidence="1">Nucleus</location>
        <location evidence="1">Nucleolus</location>
    </subcellularLocation>
</comment>
<comment type="PTM">
    <text evidence="1">Ubiquitinated at Lys-27 by RNF14 and RNF25 in response to ribosome collisions (ribosome stalling).</text>
</comment>
<comment type="similarity">
    <text evidence="3">Belongs to the universal ribosomal protein uS15 family.</text>
</comment>
<reference key="1">
    <citation type="journal article" date="1999" name="DNA Cell Biol.">
        <title>Unique features of Chinese hamster S13 gene relative to its human and Xenopus analogs.</title>
        <authorList>
            <person name="Chen M.S."/>
            <person name="Laszlo A."/>
        </authorList>
    </citation>
    <scope>NUCLEOTIDE SEQUENCE [GENOMIC DNA]</scope>
</reference>
<proteinExistence type="inferred from homology"/>
<feature type="chain" id="PRO_0000115660" description="Small ribosomal subunit protein uS15">
    <location>
        <begin position="1"/>
        <end position="151"/>
    </location>
</feature>
<feature type="modified residue" description="N6-acetyllysine; alternate" evidence="1">
    <location>
        <position position="27"/>
    </location>
</feature>
<feature type="modified residue" description="N6-succinyllysine; alternate" evidence="2">
    <location>
        <position position="27"/>
    </location>
</feature>
<feature type="modified residue" description="Phosphoserine" evidence="1">
    <location>
        <position position="30"/>
    </location>
</feature>
<feature type="modified residue" description="N6-succinyllysine" evidence="2">
    <location>
        <position position="34"/>
    </location>
</feature>
<feature type="modified residue" description="Phosphotyrosine" evidence="1">
    <location>
        <position position="38"/>
    </location>
</feature>
<feature type="cross-link" description="Glycyl lysine isopeptide (Lys-Gly) (interchain with G-Cter in ubiquitin)" evidence="1">
    <location>
        <position position="27"/>
    </location>
</feature>
<feature type="cross-link" description="Glycyl lysine isopeptide (Lys-Gly) (interchain with G-Cter in SUMO2)" evidence="1">
    <location>
        <position position="43"/>
    </location>
</feature>
<keyword id="KW-0007">Acetylation</keyword>
<keyword id="KW-0963">Cytoplasm</keyword>
<keyword id="KW-1017">Isopeptide bond</keyword>
<keyword id="KW-0539">Nucleus</keyword>
<keyword id="KW-0597">Phosphoprotein</keyword>
<keyword id="KW-0687">Ribonucleoprotein</keyword>
<keyword id="KW-0689">Ribosomal protein</keyword>
<keyword id="KW-0832">Ubl conjugation</keyword>
<accession>Q9WVH0</accession>
<gene>
    <name type="primary">RPS13</name>
</gene>
<name>RS13_CRIGR</name>
<sequence length="151" mass="17192">MGRMHAPGKGLSQSALPYRRSVPTWLKLASDDVKEQIYKLAKKGLTPSQIGVILRDSHGVAQVRFVTGNKILRILKSKGLAPDLPEDLYHLIKKAVAVRKHLERNRKDKDAKFRLILIESRIHRLARYYKTKRVLPPNWKYESSTASALVA</sequence>
<organism>
    <name type="scientific">Cricetulus griseus</name>
    <name type="common">Chinese hamster</name>
    <name type="synonym">Cricetulus barabensis griseus</name>
    <dbReference type="NCBI Taxonomy" id="10029"/>
    <lineage>
        <taxon>Eukaryota</taxon>
        <taxon>Metazoa</taxon>
        <taxon>Chordata</taxon>
        <taxon>Craniata</taxon>
        <taxon>Vertebrata</taxon>
        <taxon>Euteleostomi</taxon>
        <taxon>Mammalia</taxon>
        <taxon>Eutheria</taxon>
        <taxon>Euarchontoglires</taxon>
        <taxon>Glires</taxon>
        <taxon>Rodentia</taxon>
        <taxon>Myomorpha</taxon>
        <taxon>Muroidea</taxon>
        <taxon>Cricetidae</taxon>
        <taxon>Cricetinae</taxon>
        <taxon>Cricetulus</taxon>
    </lineage>
</organism>
<protein>
    <recommendedName>
        <fullName evidence="3">Small ribosomal subunit protein uS15</fullName>
    </recommendedName>
    <alternativeName>
        <fullName>40S ribosomal protein S13</fullName>
    </alternativeName>
</protein>
<evidence type="ECO:0000250" key="1">
    <source>
        <dbReference type="UniProtKB" id="P62277"/>
    </source>
</evidence>
<evidence type="ECO:0000250" key="2">
    <source>
        <dbReference type="UniProtKB" id="P62301"/>
    </source>
</evidence>
<evidence type="ECO:0000305" key="3"/>